<evidence type="ECO:0000255" key="1">
    <source>
        <dbReference type="HAMAP-Rule" id="MF_00021"/>
    </source>
</evidence>
<accession>Q6HCN0</accession>
<proteinExistence type="inferred from homology"/>
<name>THII_BACHK</name>
<reference key="1">
    <citation type="journal article" date="2006" name="J. Bacteriol.">
        <title>Pathogenomic sequence analysis of Bacillus cereus and Bacillus thuringiensis isolates closely related to Bacillus anthracis.</title>
        <authorList>
            <person name="Han C.S."/>
            <person name="Xie G."/>
            <person name="Challacombe J.F."/>
            <person name="Altherr M.R."/>
            <person name="Bhotika S.S."/>
            <person name="Bruce D."/>
            <person name="Campbell C.S."/>
            <person name="Campbell M.L."/>
            <person name="Chen J."/>
            <person name="Chertkov O."/>
            <person name="Cleland C."/>
            <person name="Dimitrijevic M."/>
            <person name="Doggett N.A."/>
            <person name="Fawcett J.J."/>
            <person name="Glavina T."/>
            <person name="Goodwin L.A."/>
            <person name="Hill K.K."/>
            <person name="Hitchcock P."/>
            <person name="Jackson P.J."/>
            <person name="Keim P."/>
            <person name="Kewalramani A.R."/>
            <person name="Longmire J."/>
            <person name="Lucas S."/>
            <person name="Malfatti S."/>
            <person name="McMurry K."/>
            <person name="Meincke L.J."/>
            <person name="Misra M."/>
            <person name="Moseman B.L."/>
            <person name="Mundt M."/>
            <person name="Munk A.C."/>
            <person name="Okinaka R.T."/>
            <person name="Parson-Quintana B."/>
            <person name="Reilly L.P."/>
            <person name="Richardson P."/>
            <person name="Robinson D.L."/>
            <person name="Rubin E."/>
            <person name="Saunders E."/>
            <person name="Tapia R."/>
            <person name="Tesmer J.G."/>
            <person name="Thayer N."/>
            <person name="Thompson L.S."/>
            <person name="Tice H."/>
            <person name="Ticknor L.O."/>
            <person name="Wills P.L."/>
            <person name="Brettin T.S."/>
            <person name="Gilna P."/>
        </authorList>
    </citation>
    <scope>NUCLEOTIDE SEQUENCE [LARGE SCALE GENOMIC DNA]</scope>
    <source>
        <strain>97-27</strain>
    </source>
</reference>
<protein>
    <recommendedName>
        <fullName evidence="1">Probable tRNA sulfurtransferase</fullName>
        <ecNumber evidence="1">2.8.1.4</ecNumber>
    </recommendedName>
    <alternativeName>
        <fullName evidence="1">Sulfur carrier protein ThiS sulfurtransferase</fullName>
    </alternativeName>
    <alternativeName>
        <fullName evidence="1">Thiamine biosynthesis protein ThiI</fullName>
    </alternativeName>
    <alternativeName>
        <fullName evidence="1">tRNA 4-thiouridine synthase</fullName>
    </alternativeName>
</protein>
<gene>
    <name evidence="1" type="primary">thiI</name>
    <name type="ordered locus">BT9727_4381</name>
</gene>
<dbReference type="EC" id="2.8.1.4" evidence="1"/>
<dbReference type="EMBL" id="AE017355">
    <property type="protein sequence ID" value="AAT60918.1"/>
    <property type="molecule type" value="Genomic_DNA"/>
</dbReference>
<dbReference type="RefSeq" id="WP_000989282.1">
    <property type="nucleotide sequence ID" value="NC_005957.1"/>
</dbReference>
<dbReference type="RefSeq" id="YP_038696.1">
    <property type="nucleotide sequence ID" value="NC_005957.1"/>
</dbReference>
<dbReference type="SMR" id="Q6HCN0"/>
<dbReference type="GeneID" id="75087814"/>
<dbReference type="KEGG" id="btk:BT9727_4381"/>
<dbReference type="PATRIC" id="fig|281309.8.peg.4669"/>
<dbReference type="HOGENOM" id="CLU_037952_4_0_9"/>
<dbReference type="UniPathway" id="UPA00060"/>
<dbReference type="Proteomes" id="UP000001301">
    <property type="component" value="Chromosome"/>
</dbReference>
<dbReference type="GO" id="GO:0005829">
    <property type="term" value="C:cytosol"/>
    <property type="evidence" value="ECO:0007669"/>
    <property type="project" value="TreeGrafter"/>
</dbReference>
<dbReference type="GO" id="GO:0005524">
    <property type="term" value="F:ATP binding"/>
    <property type="evidence" value="ECO:0007669"/>
    <property type="project" value="UniProtKB-UniRule"/>
</dbReference>
<dbReference type="GO" id="GO:0004810">
    <property type="term" value="F:CCA tRNA nucleotidyltransferase activity"/>
    <property type="evidence" value="ECO:0007669"/>
    <property type="project" value="InterPro"/>
</dbReference>
<dbReference type="GO" id="GO:0000049">
    <property type="term" value="F:tRNA binding"/>
    <property type="evidence" value="ECO:0007669"/>
    <property type="project" value="UniProtKB-UniRule"/>
</dbReference>
<dbReference type="GO" id="GO:0140741">
    <property type="term" value="F:tRNA-uracil-4 sulfurtransferase activity"/>
    <property type="evidence" value="ECO:0007669"/>
    <property type="project" value="UniProtKB-EC"/>
</dbReference>
<dbReference type="GO" id="GO:0009228">
    <property type="term" value="P:thiamine biosynthetic process"/>
    <property type="evidence" value="ECO:0007669"/>
    <property type="project" value="UniProtKB-KW"/>
</dbReference>
<dbReference type="GO" id="GO:0009229">
    <property type="term" value="P:thiamine diphosphate biosynthetic process"/>
    <property type="evidence" value="ECO:0007669"/>
    <property type="project" value="UniProtKB-UniRule"/>
</dbReference>
<dbReference type="GO" id="GO:0052837">
    <property type="term" value="P:thiazole biosynthetic process"/>
    <property type="evidence" value="ECO:0007669"/>
    <property type="project" value="TreeGrafter"/>
</dbReference>
<dbReference type="GO" id="GO:0002937">
    <property type="term" value="P:tRNA 4-thiouridine biosynthesis"/>
    <property type="evidence" value="ECO:0007669"/>
    <property type="project" value="TreeGrafter"/>
</dbReference>
<dbReference type="CDD" id="cd01712">
    <property type="entry name" value="PPase_ThiI"/>
    <property type="match status" value="1"/>
</dbReference>
<dbReference type="CDD" id="cd11716">
    <property type="entry name" value="THUMP_ThiI"/>
    <property type="match status" value="1"/>
</dbReference>
<dbReference type="FunFam" id="3.30.2130.30:FF:000003">
    <property type="entry name" value="Probable tRNA sulfurtransferase"/>
    <property type="match status" value="1"/>
</dbReference>
<dbReference type="FunFam" id="3.40.50.620:FF:000053">
    <property type="entry name" value="Probable tRNA sulfurtransferase"/>
    <property type="match status" value="1"/>
</dbReference>
<dbReference type="Gene3D" id="3.30.2130.30">
    <property type="match status" value="1"/>
</dbReference>
<dbReference type="Gene3D" id="3.40.50.620">
    <property type="entry name" value="HUPs"/>
    <property type="match status" value="1"/>
</dbReference>
<dbReference type="HAMAP" id="MF_00021">
    <property type="entry name" value="ThiI"/>
    <property type="match status" value="1"/>
</dbReference>
<dbReference type="InterPro" id="IPR014729">
    <property type="entry name" value="Rossmann-like_a/b/a_fold"/>
</dbReference>
<dbReference type="InterPro" id="IPR020536">
    <property type="entry name" value="ThiI_AANH"/>
</dbReference>
<dbReference type="InterPro" id="IPR054173">
    <property type="entry name" value="ThiI_fer"/>
</dbReference>
<dbReference type="InterPro" id="IPR049961">
    <property type="entry name" value="ThiI_N"/>
</dbReference>
<dbReference type="InterPro" id="IPR004114">
    <property type="entry name" value="THUMP_dom"/>
</dbReference>
<dbReference type="InterPro" id="IPR049962">
    <property type="entry name" value="THUMP_ThiI"/>
</dbReference>
<dbReference type="InterPro" id="IPR003720">
    <property type="entry name" value="tRNA_STrfase"/>
</dbReference>
<dbReference type="InterPro" id="IPR050102">
    <property type="entry name" value="tRNA_sulfurtransferase_ThiI"/>
</dbReference>
<dbReference type="NCBIfam" id="TIGR00342">
    <property type="entry name" value="tRNA uracil 4-sulfurtransferase ThiI"/>
    <property type="match status" value="1"/>
</dbReference>
<dbReference type="PANTHER" id="PTHR43209">
    <property type="entry name" value="TRNA SULFURTRANSFERASE"/>
    <property type="match status" value="1"/>
</dbReference>
<dbReference type="PANTHER" id="PTHR43209:SF1">
    <property type="entry name" value="TRNA SULFURTRANSFERASE"/>
    <property type="match status" value="1"/>
</dbReference>
<dbReference type="Pfam" id="PF02568">
    <property type="entry name" value="ThiI"/>
    <property type="match status" value="1"/>
</dbReference>
<dbReference type="Pfam" id="PF22025">
    <property type="entry name" value="ThiI_fer"/>
    <property type="match status" value="1"/>
</dbReference>
<dbReference type="Pfam" id="PF02926">
    <property type="entry name" value="THUMP"/>
    <property type="match status" value="1"/>
</dbReference>
<dbReference type="SMART" id="SM00981">
    <property type="entry name" value="THUMP"/>
    <property type="match status" value="1"/>
</dbReference>
<dbReference type="SUPFAM" id="SSF52402">
    <property type="entry name" value="Adenine nucleotide alpha hydrolases-like"/>
    <property type="match status" value="1"/>
</dbReference>
<dbReference type="SUPFAM" id="SSF143437">
    <property type="entry name" value="THUMP domain-like"/>
    <property type="match status" value="1"/>
</dbReference>
<dbReference type="PROSITE" id="PS51165">
    <property type="entry name" value="THUMP"/>
    <property type="match status" value="1"/>
</dbReference>
<organism>
    <name type="scientific">Bacillus thuringiensis subsp. konkukian (strain 97-27)</name>
    <dbReference type="NCBI Taxonomy" id="281309"/>
    <lineage>
        <taxon>Bacteria</taxon>
        <taxon>Bacillati</taxon>
        <taxon>Bacillota</taxon>
        <taxon>Bacilli</taxon>
        <taxon>Bacillales</taxon>
        <taxon>Bacillaceae</taxon>
        <taxon>Bacillus</taxon>
        <taxon>Bacillus cereus group</taxon>
    </lineage>
</organism>
<feature type="chain" id="PRO_1000074207" description="Probable tRNA sulfurtransferase">
    <location>
        <begin position="1"/>
        <end position="404"/>
    </location>
</feature>
<feature type="domain" description="THUMP" evidence="1">
    <location>
        <begin position="61"/>
        <end position="166"/>
    </location>
</feature>
<feature type="binding site" evidence="1">
    <location>
        <begin position="184"/>
        <end position="185"/>
    </location>
    <ligand>
        <name>ATP</name>
        <dbReference type="ChEBI" id="CHEBI:30616"/>
    </ligand>
</feature>
<feature type="binding site" evidence="1">
    <location>
        <begin position="209"/>
        <end position="210"/>
    </location>
    <ligand>
        <name>ATP</name>
        <dbReference type="ChEBI" id="CHEBI:30616"/>
    </ligand>
</feature>
<feature type="binding site" evidence="1">
    <location>
        <position position="266"/>
    </location>
    <ligand>
        <name>ATP</name>
        <dbReference type="ChEBI" id="CHEBI:30616"/>
    </ligand>
</feature>
<feature type="binding site" evidence="1">
    <location>
        <position position="288"/>
    </location>
    <ligand>
        <name>ATP</name>
        <dbReference type="ChEBI" id="CHEBI:30616"/>
    </ligand>
</feature>
<feature type="binding site" evidence="1">
    <location>
        <position position="297"/>
    </location>
    <ligand>
        <name>ATP</name>
        <dbReference type="ChEBI" id="CHEBI:30616"/>
    </ligand>
</feature>
<keyword id="KW-0067">ATP-binding</keyword>
<keyword id="KW-0963">Cytoplasm</keyword>
<keyword id="KW-0547">Nucleotide-binding</keyword>
<keyword id="KW-0694">RNA-binding</keyword>
<keyword id="KW-0784">Thiamine biosynthesis</keyword>
<keyword id="KW-0808">Transferase</keyword>
<keyword id="KW-0820">tRNA-binding</keyword>
<comment type="function">
    <text evidence="1">Catalyzes the ATP-dependent transfer of a sulfur to tRNA to produce 4-thiouridine in position 8 of tRNAs, which functions as a near-UV photosensor. Also catalyzes the transfer of sulfur to the sulfur carrier protein ThiS, forming ThiS-thiocarboxylate. This is a step in the synthesis of thiazole, in the thiamine biosynthesis pathway. The sulfur is donated as persulfide by IscS.</text>
</comment>
<comment type="catalytic activity">
    <reaction evidence="1">
        <text>[ThiI sulfur-carrier protein]-S-sulfanyl-L-cysteine + a uridine in tRNA + 2 reduced [2Fe-2S]-[ferredoxin] + ATP + H(+) = [ThiI sulfur-carrier protein]-L-cysteine + a 4-thiouridine in tRNA + 2 oxidized [2Fe-2S]-[ferredoxin] + AMP + diphosphate</text>
        <dbReference type="Rhea" id="RHEA:24176"/>
        <dbReference type="Rhea" id="RHEA-COMP:10000"/>
        <dbReference type="Rhea" id="RHEA-COMP:10001"/>
        <dbReference type="Rhea" id="RHEA-COMP:13337"/>
        <dbReference type="Rhea" id="RHEA-COMP:13338"/>
        <dbReference type="Rhea" id="RHEA-COMP:13339"/>
        <dbReference type="Rhea" id="RHEA-COMP:13340"/>
        <dbReference type="ChEBI" id="CHEBI:15378"/>
        <dbReference type="ChEBI" id="CHEBI:29950"/>
        <dbReference type="ChEBI" id="CHEBI:30616"/>
        <dbReference type="ChEBI" id="CHEBI:33019"/>
        <dbReference type="ChEBI" id="CHEBI:33737"/>
        <dbReference type="ChEBI" id="CHEBI:33738"/>
        <dbReference type="ChEBI" id="CHEBI:61963"/>
        <dbReference type="ChEBI" id="CHEBI:65315"/>
        <dbReference type="ChEBI" id="CHEBI:136798"/>
        <dbReference type="ChEBI" id="CHEBI:456215"/>
        <dbReference type="EC" id="2.8.1.4"/>
    </reaction>
</comment>
<comment type="catalytic activity">
    <reaction evidence="1">
        <text>[ThiS sulfur-carrier protein]-C-terminal Gly-Gly-AMP + S-sulfanyl-L-cysteinyl-[cysteine desulfurase] + AH2 = [ThiS sulfur-carrier protein]-C-terminal-Gly-aminoethanethioate + L-cysteinyl-[cysteine desulfurase] + A + AMP + 2 H(+)</text>
        <dbReference type="Rhea" id="RHEA:43340"/>
        <dbReference type="Rhea" id="RHEA-COMP:12157"/>
        <dbReference type="Rhea" id="RHEA-COMP:12158"/>
        <dbReference type="Rhea" id="RHEA-COMP:12910"/>
        <dbReference type="Rhea" id="RHEA-COMP:19908"/>
        <dbReference type="ChEBI" id="CHEBI:13193"/>
        <dbReference type="ChEBI" id="CHEBI:15378"/>
        <dbReference type="ChEBI" id="CHEBI:17499"/>
        <dbReference type="ChEBI" id="CHEBI:29950"/>
        <dbReference type="ChEBI" id="CHEBI:61963"/>
        <dbReference type="ChEBI" id="CHEBI:90618"/>
        <dbReference type="ChEBI" id="CHEBI:232372"/>
        <dbReference type="ChEBI" id="CHEBI:456215"/>
    </reaction>
</comment>
<comment type="pathway">
    <text evidence="1">Cofactor biosynthesis; thiamine diphosphate biosynthesis.</text>
</comment>
<comment type="subcellular location">
    <subcellularLocation>
        <location evidence="1">Cytoplasm</location>
    </subcellularLocation>
</comment>
<comment type="similarity">
    <text evidence="1">Belongs to the ThiI family.</text>
</comment>
<sequence length="404" mass="45856">MMTYEYILVRYGEMTTKGKNRSKFVSTLKDNVKFKLKKFPNIKIDATHDRMYIQLNGEDHEAVSERLKDVFGIHKFNLAMKVPSELEDIKKGALAAFLQVKGDVKTFKITVHRSYKHFPMRTMELLPEIGGHILENTEDITVDVHNPDVNVRVEIRSGYSYIMCDERMGAGGLPVGVGGKVMVLLSGGIDSPVAAYLTMKRGVSVEAVHFHSPPFTSERAKQKVIDLAQELTKYCKRVTLHLVPFTEVQKTINKEIPSSYSMTVMRRMMMRITERIAEERNALAITTGESLGQVASQTLDSMHTINEVTNYPIIRPLITMDKLEIIKIAEEIGTYDISIRPYEDCCTVFTPASPATKPKREKANRFEAKYDFTPLIDEAVANKETMVLQTVEVVAEEEKFEELF</sequence>